<protein>
    <recommendedName>
        <fullName evidence="1">Homogentisate 1,2-dioxygenase</fullName>
        <shortName evidence="1">HGDO</shortName>
        <ecNumber evidence="1">1.13.11.5</ecNumber>
    </recommendedName>
    <alternativeName>
        <fullName evidence="1">Homogentisate oxygenase</fullName>
    </alternativeName>
    <alternativeName>
        <fullName evidence="1">Homogentisic acid oxidase</fullName>
    </alternativeName>
    <alternativeName>
        <fullName evidence="1">Homogentisicase</fullName>
    </alternativeName>
</protein>
<evidence type="ECO:0000255" key="1">
    <source>
        <dbReference type="HAMAP-Rule" id="MF_00334"/>
    </source>
</evidence>
<proteinExistence type="inferred from homology"/>
<feature type="chain" id="PRO_1000019530" description="Homogentisate 1,2-dioxygenase">
    <location>
        <begin position="1"/>
        <end position="416"/>
    </location>
</feature>
<feature type="active site" description="Proton acceptor" evidence="1">
    <location>
        <position position="275"/>
    </location>
</feature>
<feature type="binding site" evidence="1">
    <location>
        <position position="318"/>
    </location>
    <ligand>
        <name>Fe cation</name>
        <dbReference type="ChEBI" id="CHEBI:24875"/>
    </ligand>
</feature>
<feature type="binding site" evidence="1">
    <location>
        <position position="324"/>
    </location>
    <ligand>
        <name>Fe cation</name>
        <dbReference type="ChEBI" id="CHEBI:24875"/>
    </ligand>
</feature>
<feature type="binding site" evidence="1">
    <location>
        <position position="333"/>
    </location>
    <ligand>
        <name>homogentisate</name>
        <dbReference type="ChEBI" id="CHEBI:16169"/>
    </ligand>
</feature>
<feature type="binding site" evidence="1">
    <location>
        <position position="354"/>
    </location>
    <ligand>
        <name>Fe cation</name>
        <dbReference type="ChEBI" id="CHEBI:24875"/>
    </ligand>
</feature>
<feature type="binding site" evidence="1">
    <location>
        <position position="354"/>
    </location>
    <ligand>
        <name>homogentisate</name>
        <dbReference type="ChEBI" id="CHEBI:16169"/>
    </ligand>
</feature>
<comment type="function">
    <text evidence="1">Involved in the catabolism of homogentisate (2,5-dihydroxyphenylacetate or 2,5-OH-PhAc), a central intermediate in the degradation of phenylalanine and tyrosine. Catalyzes the oxidative ring cleavage of the aromatic ring of homogentisate to yield maleylacetoacetate.</text>
</comment>
<comment type="catalytic activity">
    <reaction evidence="1">
        <text>homogentisate + O2 = 4-maleylacetoacetate + H(+)</text>
        <dbReference type="Rhea" id="RHEA:15449"/>
        <dbReference type="ChEBI" id="CHEBI:15378"/>
        <dbReference type="ChEBI" id="CHEBI:15379"/>
        <dbReference type="ChEBI" id="CHEBI:16169"/>
        <dbReference type="ChEBI" id="CHEBI:17105"/>
        <dbReference type="EC" id="1.13.11.5"/>
    </reaction>
</comment>
<comment type="cofactor">
    <cofactor evidence="1">
        <name>Fe cation</name>
        <dbReference type="ChEBI" id="CHEBI:24875"/>
    </cofactor>
</comment>
<comment type="pathway">
    <text evidence="1">Amino-acid degradation; L-phenylalanine degradation; acetoacetate and fumarate from L-phenylalanine: step 4/6.</text>
</comment>
<comment type="subunit">
    <text evidence="1">Hexamer; dimer of trimers.</text>
</comment>
<comment type="similarity">
    <text evidence="1">Belongs to the homogentisate dioxygenase family.</text>
</comment>
<reference key="1">
    <citation type="submission" date="2006-11" db="EMBL/GenBank/DDBJ databases">
        <title>Identification and characterization of a new conjugation/ type IVA secretion system (trb/tra) of L. pneumophila Corby localized on a mobile genomic island.</title>
        <authorList>
            <person name="Gloeckner G."/>
            <person name="Albert-Weissenberger C."/>
            <person name="Weinmann E."/>
            <person name="Jacobi S."/>
            <person name="Schunder E."/>
            <person name="Steinert M."/>
            <person name="Buchrieser C."/>
            <person name="Hacker J."/>
            <person name="Heuner K."/>
        </authorList>
    </citation>
    <scope>NUCLEOTIDE SEQUENCE [LARGE SCALE GENOMIC DNA]</scope>
    <source>
        <strain>Corby</strain>
    </source>
</reference>
<accession>A5IBD8</accession>
<name>HGD_LEGPC</name>
<keyword id="KW-0223">Dioxygenase</keyword>
<keyword id="KW-0408">Iron</keyword>
<keyword id="KW-0479">Metal-binding</keyword>
<keyword id="KW-0560">Oxidoreductase</keyword>
<keyword id="KW-0585">Phenylalanine catabolism</keyword>
<keyword id="KW-0828">Tyrosine catabolism</keyword>
<sequence length="416" mass="47486">MYLQGFGNYHHSEAVKGALPPNQNSPQHCNLGLYAEQLSGTAFTRPRHNNLRSWLYRILPTVTQGTYYPYEFNIMHSFVDEFSPNAMRWSPLYNSSQIKCDFVEGLFHIAGSPLVNTYTYYCNHSMSDKYFANNDGELLFVPYAGEIHLYTEFGKLMLSSGSIAVIPRGVKFKVEVISKEAKGYLCENSGNPLTLPQLGPIGANGLANPRHFQYPVAAFEDSGGEHTIICKNQKKLWFTVCNHSPLNVVAWHGNYAPYCYDLSLFNTINTVSFDHPDPSIFTVLTSESEIPGVSNLDFVIFPPRWMVAEHTFRPPYFHRNYMNELMGLVYGEYDAKKEGFIPGGISIHNCMTPHGPDYESYEIAASQDLKPNYINSLAFMFETKDYWQVTEQAYRHPSRQVDYLNCWQGFKVEFSQ</sequence>
<gene>
    <name evidence="1" type="primary">hmgA</name>
    <name type="ordered locus">LPC_0710</name>
</gene>
<organism>
    <name type="scientific">Legionella pneumophila (strain Corby)</name>
    <dbReference type="NCBI Taxonomy" id="400673"/>
    <lineage>
        <taxon>Bacteria</taxon>
        <taxon>Pseudomonadati</taxon>
        <taxon>Pseudomonadota</taxon>
        <taxon>Gammaproteobacteria</taxon>
        <taxon>Legionellales</taxon>
        <taxon>Legionellaceae</taxon>
        <taxon>Legionella</taxon>
    </lineage>
</organism>
<dbReference type="EC" id="1.13.11.5" evidence="1"/>
<dbReference type="EMBL" id="CP000675">
    <property type="protein sequence ID" value="ABQ54688.1"/>
    <property type="molecule type" value="Genomic_DNA"/>
</dbReference>
<dbReference type="RefSeq" id="WP_011946340.1">
    <property type="nucleotide sequence ID" value="NZ_JAPMSS010000002.1"/>
</dbReference>
<dbReference type="SMR" id="A5IBD8"/>
<dbReference type="KEGG" id="lpc:LPC_0710"/>
<dbReference type="HOGENOM" id="CLU_027174_0_0_6"/>
<dbReference type="UniPathway" id="UPA00139">
    <property type="reaction ID" value="UER00339"/>
</dbReference>
<dbReference type="GO" id="GO:0005737">
    <property type="term" value="C:cytoplasm"/>
    <property type="evidence" value="ECO:0007669"/>
    <property type="project" value="TreeGrafter"/>
</dbReference>
<dbReference type="GO" id="GO:0004411">
    <property type="term" value="F:homogentisate 1,2-dioxygenase activity"/>
    <property type="evidence" value="ECO:0007669"/>
    <property type="project" value="UniProtKB-UniRule"/>
</dbReference>
<dbReference type="GO" id="GO:0005506">
    <property type="term" value="F:iron ion binding"/>
    <property type="evidence" value="ECO:0007669"/>
    <property type="project" value="UniProtKB-UniRule"/>
</dbReference>
<dbReference type="GO" id="GO:0006559">
    <property type="term" value="P:L-phenylalanine catabolic process"/>
    <property type="evidence" value="ECO:0007669"/>
    <property type="project" value="UniProtKB-UniRule"/>
</dbReference>
<dbReference type="GO" id="GO:0006572">
    <property type="term" value="P:tyrosine catabolic process"/>
    <property type="evidence" value="ECO:0007669"/>
    <property type="project" value="UniProtKB-UniRule"/>
</dbReference>
<dbReference type="CDD" id="cd07000">
    <property type="entry name" value="cupin_HGO_N"/>
    <property type="match status" value="1"/>
</dbReference>
<dbReference type="FunFam" id="2.60.120.10:FF:000034">
    <property type="entry name" value="Homogentisate 1,2-dioxygenase"/>
    <property type="match status" value="1"/>
</dbReference>
<dbReference type="Gene3D" id="2.60.120.10">
    <property type="entry name" value="Jelly Rolls"/>
    <property type="match status" value="1"/>
</dbReference>
<dbReference type="HAMAP" id="MF_00334">
    <property type="entry name" value="Homogentis_dioxygen"/>
    <property type="match status" value="1"/>
</dbReference>
<dbReference type="InterPro" id="IPR046451">
    <property type="entry name" value="HgmA_C"/>
</dbReference>
<dbReference type="InterPro" id="IPR046452">
    <property type="entry name" value="HgmA_N"/>
</dbReference>
<dbReference type="InterPro" id="IPR005708">
    <property type="entry name" value="Homogentis_dOase"/>
</dbReference>
<dbReference type="InterPro" id="IPR022950">
    <property type="entry name" value="Homogentis_dOase_bac"/>
</dbReference>
<dbReference type="InterPro" id="IPR014710">
    <property type="entry name" value="RmlC-like_jellyroll"/>
</dbReference>
<dbReference type="InterPro" id="IPR011051">
    <property type="entry name" value="RmlC_Cupin_sf"/>
</dbReference>
<dbReference type="NCBIfam" id="TIGR01015">
    <property type="entry name" value="hmgA"/>
    <property type="match status" value="1"/>
</dbReference>
<dbReference type="PANTHER" id="PTHR11056">
    <property type="entry name" value="HOMOGENTISATE 1,2-DIOXYGENASE"/>
    <property type="match status" value="1"/>
</dbReference>
<dbReference type="PANTHER" id="PTHR11056:SF0">
    <property type="entry name" value="HOMOGENTISATE 1,2-DIOXYGENASE"/>
    <property type="match status" value="1"/>
</dbReference>
<dbReference type="Pfam" id="PF04209">
    <property type="entry name" value="HgmA_C"/>
    <property type="match status" value="1"/>
</dbReference>
<dbReference type="Pfam" id="PF20510">
    <property type="entry name" value="HgmA_N"/>
    <property type="match status" value="1"/>
</dbReference>
<dbReference type="SUPFAM" id="SSF51182">
    <property type="entry name" value="RmlC-like cupins"/>
    <property type="match status" value="1"/>
</dbReference>